<gene>
    <name evidence="6" type="primary">XRCC1</name>
    <name evidence="9" type="ordered locus">At1g80420</name>
    <name evidence="10" type="ORF">T21F11.25</name>
</gene>
<sequence>MSQKRNLPSWMSSRDPEITPSKSHCKKPKDEGPTEEHNSRNAPSNKSEHAEPSSNTTEFSKLMEGVVFVLSGFVNPERSTLRSQALTMGATYQPDWNAGSTLLICAFPNTPKFRQVETNGGTIISKEWITECYAQKKLVDIEQYLMHAGKPWRKSSSPQDANREKREHLSKKPEKQVEKKTETRGTPSTSSKNRSACNLVKEPFFVTEVKKWARDDLSQTISWLESQEEKPEPGEIKRIAAEGVLTCLQDAIDSLEQKQDIGSVTELWSFVPRVVKELGKMESSSKKENSTASKEEVCKQAKSWKKIYEAELAKPGEDESTSRVACGYDSDMTVEMTEEEIELAYRNVSLECL</sequence>
<name>XRCC1_ARATH</name>
<proteinExistence type="evidence at protein level"/>
<evidence type="ECO:0000250" key="1">
    <source>
        <dbReference type="UniProtKB" id="P18887"/>
    </source>
</evidence>
<evidence type="ECO:0000255" key="2"/>
<evidence type="ECO:0000255" key="3">
    <source>
        <dbReference type="PROSITE-ProRule" id="PRU00033"/>
    </source>
</evidence>
<evidence type="ECO:0000256" key="4">
    <source>
        <dbReference type="SAM" id="MobiDB-lite"/>
    </source>
</evidence>
<evidence type="ECO:0000269" key="5">
    <source>
    </source>
</evidence>
<evidence type="ECO:0000303" key="6">
    <source>
    </source>
</evidence>
<evidence type="ECO:0000303" key="7">
    <source>
    </source>
</evidence>
<evidence type="ECO:0000305" key="8"/>
<evidence type="ECO:0000312" key="9">
    <source>
        <dbReference type="Araport" id="AT1G80420"/>
    </source>
</evidence>
<evidence type="ECO:0000312" key="10">
    <source>
        <dbReference type="EMBL" id="AAF27125.1"/>
    </source>
</evidence>
<evidence type="ECO:0000312" key="11">
    <source>
        <dbReference type="EMBL" id="ABD85156.1"/>
    </source>
</evidence>
<organism evidence="11">
    <name type="scientific">Arabidopsis thaliana</name>
    <name type="common">Mouse-ear cress</name>
    <dbReference type="NCBI Taxonomy" id="3702"/>
    <lineage>
        <taxon>Eukaryota</taxon>
        <taxon>Viridiplantae</taxon>
        <taxon>Streptophyta</taxon>
        <taxon>Embryophyta</taxon>
        <taxon>Tracheophyta</taxon>
        <taxon>Spermatophyta</taxon>
        <taxon>Magnoliopsida</taxon>
        <taxon>eudicotyledons</taxon>
        <taxon>Gunneridae</taxon>
        <taxon>Pentapetalae</taxon>
        <taxon>rosids</taxon>
        <taxon>malvids</taxon>
        <taxon>Brassicales</taxon>
        <taxon>Brassicaceae</taxon>
        <taxon>Camelineae</taxon>
        <taxon>Arabidopsis</taxon>
    </lineage>
</organism>
<keyword id="KW-0025">Alternative splicing</keyword>
<keyword id="KW-0175">Coiled coil</keyword>
<keyword id="KW-0227">DNA damage</keyword>
<keyword id="KW-0234">DNA repair</keyword>
<keyword id="KW-0238">DNA-binding</keyword>
<keyword id="KW-0539">Nucleus</keyword>
<keyword id="KW-1185">Reference proteome</keyword>
<keyword id="KW-0677">Repeat</keyword>
<accession>Q24JK4</accession>
<accession>F4HS73</accession>
<accession>Q0WPZ1</accession>
<accession>Q9FT82</accession>
<accession>Q9M8L1</accession>
<comment type="function">
    <text evidence="1 5">Corrects defective DNA strand-break repair and sister chromatid exchange following treatment with ionizing radiation and alkylating agents (By similarity). Involved in DNA demethylation pathway by stimulating cytosine methylation (5-meC) excision, gap tailoring, and DNA ligation.</text>
</comment>
<comment type="subunit">
    <text evidence="1 5">Homodimer. Interacts with polynucleotide kinase (PNK), DNA polymerase-beta (POLB) and DNA ligase III (LIG3) (By similarity). Interacts with ZDP and ROS1. Binds to various forms of double-stranded DNA (e.g. methylated, unmethylated, with single-nucleotide gap flanked by 3'-phosphate or 5'-phosphate ends).</text>
</comment>
<comment type="subcellular location">
    <subcellularLocation>
        <location evidence="1">Nucleus</location>
    </subcellularLocation>
    <text evidence="1">Accumulates at sites of DNA damage.</text>
</comment>
<comment type="alternative products">
    <event type="alternative splicing"/>
    <isoform>
        <id>Q24JK4-1</id>
        <name>1</name>
        <sequence type="displayed"/>
    </isoform>
    <isoform>
        <id>Q24JK4-2</id>
        <name>2</name>
        <sequence type="described" ref="VSP_057111"/>
    </isoform>
</comment>
<comment type="disruption phenotype">
    <text evidence="5">Reduced capacity to complete DNA demethylation initiated by ROS1.</text>
</comment>
<comment type="sequence caution" evidence="8">
    <conflict type="erroneous gene model prediction">
        <sequence resource="EMBL-CDS" id="AAF27125"/>
    </conflict>
</comment>
<feature type="chain" id="PRO_0000430949" description="DNA-repair protein XRCC1">
    <location>
        <begin position="1"/>
        <end position="353"/>
    </location>
</feature>
<feature type="domain" description="BRCT 1" evidence="3">
    <location>
        <begin position="58"/>
        <end position="146"/>
    </location>
</feature>
<feature type="domain" description="BRCT 2" evidence="3">
    <location>
        <begin position="266"/>
        <end position="347"/>
    </location>
</feature>
<feature type="region of interest" description="Disordered" evidence="4">
    <location>
        <begin position="1"/>
        <end position="57"/>
    </location>
</feature>
<feature type="region of interest" description="Disordered" evidence="4">
    <location>
        <begin position="150"/>
        <end position="194"/>
    </location>
</feature>
<feature type="coiled-coil region" evidence="2">
    <location>
        <begin position="240"/>
        <end position="260"/>
    </location>
</feature>
<feature type="compositionally biased region" description="Polar residues" evidence="4">
    <location>
        <begin position="1"/>
        <end position="12"/>
    </location>
</feature>
<feature type="compositionally biased region" description="Basic and acidic residues" evidence="4">
    <location>
        <begin position="28"/>
        <end position="39"/>
    </location>
</feature>
<feature type="compositionally biased region" description="Basic and acidic residues" evidence="4">
    <location>
        <begin position="161"/>
        <end position="183"/>
    </location>
</feature>
<feature type="compositionally biased region" description="Polar residues" evidence="4">
    <location>
        <begin position="184"/>
        <end position="194"/>
    </location>
</feature>
<feature type="splice variant" id="VSP_057111" description="In isoform 2." evidence="7">
    <original>REHLSKKPEKQVEKKTETRGTPSTSSK</original>
    <variation>SFSYCTASLRCLVDS</variation>
    <location>
        <begin position="166"/>
        <end position="192"/>
    </location>
</feature>
<feature type="sequence conflict" description="In Ref. 1; AAM08130 and 2; CAC16136." evidence="8" ref="1 2">
    <original>F</original>
    <variation>S</variation>
    <location>
        <position position="205"/>
    </location>
</feature>
<feature type="sequence conflict" description="In Ref. 6; BAF00808." evidence="8" ref="6">
    <original>Q</original>
    <variation>R</variation>
    <location>
        <position position="227"/>
    </location>
</feature>
<reference key="1">
    <citation type="submission" date="2000-11" db="EMBL/GenBank/DDBJ databases">
        <title>Cloning and characterization of the gene encoding DNA repair protein XRCC1 from Arabidopsis thaliana.</title>
        <authorList>
            <person name="Kim J."/>
            <person name="Kmiec E."/>
        </authorList>
    </citation>
    <scope>NUCLEOTIDE SEQUENCE [MRNA]</scope>
</reference>
<reference key="2">
    <citation type="journal article" date="2002" name="Mol. Cell. Biol.">
        <title>Central role for the XRCC1 BRCT I domain in mammalian DNA single-strand break repair.</title>
        <authorList>
            <person name="Taylor R.M."/>
            <person name="Thistlethwaite A."/>
            <person name="Caldecott K.W."/>
        </authorList>
    </citation>
    <scope>NUCLEOTIDE SEQUENCE [MRNA]</scope>
    <source>
        <strain>cv. Columbia</strain>
    </source>
</reference>
<reference key="3">
    <citation type="journal article" date="2000" name="Nature">
        <title>Sequence and analysis of chromosome 1 of the plant Arabidopsis thaliana.</title>
        <authorList>
            <person name="Theologis A."/>
            <person name="Ecker J.R."/>
            <person name="Palm C.J."/>
            <person name="Federspiel N.A."/>
            <person name="Kaul S."/>
            <person name="White O."/>
            <person name="Alonso J."/>
            <person name="Altafi H."/>
            <person name="Araujo R."/>
            <person name="Bowman C.L."/>
            <person name="Brooks S.Y."/>
            <person name="Buehler E."/>
            <person name="Chan A."/>
            <person name="Chao Q."/>
            <person name="Chen H."/>
            <person name="Cheuk R.F."/>
            <person name="Chin C.W."/>
            <person name="Chung M.K."/>
            <person name="Conn L."/>
            <person name="Conway A.B."/>
            <person name="Conway A.R."/>
            <person name="Creasy T.H."/>
            <person name="Dewar K."/>
            <person name="Dunn P."/>
            <person name="Etgu P."/>
            <person name="Feldblyum T.V."/>
            <person name="Feng J.-D."/>
            <person name="Fong B."/>
            <person name="Fujii C.Y."/>
            <person name="Gill J.E."/>
            <person name="Goldsmith A.D."/>
            <person name="Haas B."/>
            <person name="Hansen N.F."/>
            <person name="Hughes B."/>
            <person name="Huizar L."/>
            <person name="Hunter J.L."/>
            <person name="Jenkins J."/>
            <person name="Johnson-Hopson C."/>
            <person name="Khan S."/>
            <person name="Khaykin E."/>
            <person name="Kim C.J."/>
            <person name="Koo H.L."/>
            <person name="Kremenetskaia I."/>
            <person name="Kurtz D.B."/>
            <person name="Kwan A."/>
            <person name="Lam B."/>
            <person name="Langin-Hooper S."/>
            <person name="Lee A."/>
            <person name="Lee J.M."/>
            <person name="Lenz C.A."/>
            <person name="Li J.H."/>
            <person name="Li Y.-P."/>
            <person name="Lin X."/>
            <person name="Liu S.X."/>
            <person name="Liu Z.A."/>
            <person name="Luros J.S."/>
            <person name="Maiti R."/>
            <person name="Marziali A."/>
            <person name="Militscher J."/>
            <person name="Miranda M."/>
            <person name="Nguyen M."/>
            <person name="Nierman W.C."/>
            <person name="Osborne B.I."/>
            <person name="Pai G."/>
            <person name="Peterson J."/>
            <person name="Pham P.K."/>
            <person name="Rizzo M."/>
            <person name="Rooney T."/>
            <person name="Rowley D."/>
            <person name="Sakano H."/>
            <person name="Salzberg S.L."/>
            <person name="Schwartz J.R."/>
            <person name="Shinn P."/>
            <person name="Southwick A.M."/>
            <person name="Sun H."/>
            <person name="Tallon L.J."/>
            <person name="Tambunga G."/>
            <person name="Toriumi M.J."/>
            <person name="Town C.D."/>
            <person name="Utterback T."/>
            <person name="Van Aken S."/>
            <person name="Vaysberg M."/>
            <person name="Vysotskaia V.S."/>
            <person name="Walker M."/>
            <person name="Wu D."/>
            <person name="Yu G."/>
            <person name="Fraser C.M."/>
            <person name="Venter J.C."/>
            <person name="Davis R.W."/>
        </authorList>
    </citation>
    <scope>NUCLEOTIDE SEQUENCE [LARGE SCALE GENOMIC DNA]</scope>
    <source>
        <strain>cv. Columbia</strain>
    </source>
</reference>
<reference key="4">
    <citation type="journal article" date="2017" name="Plant J.">
        <title>Araport11: a complete reannotation of the Arabidopsis thaliana reference genome.</title>
        <authorList>
            <person name="Cheng C.Y."/>
            <person name="Krishnakumar V."/>
            <person name="Chan A.P."/>
            <person name="Thibaud-Nissen F."/>
            <person name="Schobel S."/>
            <person name="Town C.D."/>
        </authorList>
    </citation>
    <scope>GENOME REANNOTATION</scope>
    <source>
        <strain>cv. Columbia</strain>
    </source>
</reference>
<reference key="5">
    <citation type="submission" date="2006-03" db="EMBL/GenBank/DDBJ databases">
        <title>Arabidopsis ORF clones.</title>
        <authorList>
            <person name="Shinn P."/>
            <person name="Chen H."/>
            <person name="Kim C.J."/>
            <person name="Ecker J.R."/>
        </authorList>
    </citation>
    <scope>NUCLEOTIDE SEQUENCE [LARGE SCALE MRNA]</scope>
    <source>
        <strain>cv. Columbia</strain>
    </source>
</reference>
<reference key="6">
    <citation type="submission" date="2006-07" db="EMBL/GenBank/DDBJ databases">
        <title>Large-scale analysis of RIKEN Arabidopsis full-length (RAFL) cDNAs.</title>
        <authorList>
            <person name="Totoki Y."/>
            <person name="Seki M."/>
            <person name="Ishida J."/>
            <person name="Nakajima M."/>
            <person name="Enju A."/>
            <person name="Kamiya A."/>
            <person name="Narusaka M."/>
            <person name="Shin-i T."/>
            <person name="Nakagawa M."/>
            <person name="Sakamoto N."/>
            <person name="Oishi K."/>
            <person name="Kohara Y."/>
            <person name="Kobayashi M."/>
            <person name="Toyoda A."/>
            <person name="Sakaki Y."/>
            <person name="Sakurai T."/>
            <person name="Iida K."/>
            <person name="Akiyama K."/>
            <person name="Satou M."/>
            <person name="Toyoda T."/>
            <person name="Konagaya A."/>
            <person name="Carninci P."/>
            <person name="Kawai J."/>
            <person name="Hayashizaki Y."/>
            <person name="Shinozaki K."/>
        </authorList>
    </citation>
    <scope>NUCLEOTIDE SEQUENCE [LARGE SCALE MRNA]</scope>
    <source>
        <strain>cv. Columbia</strain>
    </source>
</reference>
<reference key="7">
    <citation type="journal article" date="2013" name="J. Biol. Chem.">
        <title>The DNA repair protein XRCC1 functions in the plant DNA demethylation pathway by stimulating cytosine methylation (5-meC) excision, gap tailoring, and DNA ligation.</title>
        <authorList>
            <person name="Martinez-Macias M.I."/>
            <person name="Cordoba-Canero D."/>
            <person name="Ariza R.R."/>
            <person name="Roldan-Arjona T."/>
        </authorList>
    </citation>
    <scope>FUNCTION</scope>
    <scope>DISRUPTION PHENOTYPE</scope>
    <scope>INTERACTION WITH ZDP AND ROS1</scope>
    <scope>DNA-BINDING</scope>
    <source>
        <strain>cv. Columbia</strain>
    </source>
</reference>
<dbReference type="EMBL" id="AF324348">
    <property type="protein sequence ID" value="AAM08130.1"/>
    <property type="molecule type" value="mRNA"/>
</dbReference>
<dbReference type="EMBL" id="AJ276506">
    <property type="protein sequence ID" value="CAC16136.1"/>
    <property type="molecule type" value="mRNA"/>
</dbReference>
<dbReference type="EMBL" id="AC018849">
    <property type="protein sequence ID" value="AAF27125.1"/>
    <property type="status" value="ALT_SEQ"/>
    <property type="molecule type" value="Genomic_DNA"/>
</dbReference>
<dbReference type="EMBL" id="CP002684">
    <property type="protein sequence ID" value="AEE36401.1"/>
    <property type="molecule type" value="Genomic_DNA"/>
</dbReference>
<dbReference type="EMBL" id="CP002684">
    <property type="protein sequence ID" value="AEE36402.1"/>
    <property type="molecule type" value="Genomic_DNA"/>
</dbReference>
<dbReference type="EMBL" id="CP002684">
    <property type="protein sequence ID" value="AEE36403.1"/>
    <property type="molecule type" value="Genomic_DNA"/>
</dbReference>
<dbReference type="EMBL" id="CP002684">
    <property type="protein sequence ID" value="AEE36404.1"/>
    <property type="molecule type" value="Genomic_DNA"/>
</dbReference>
<dbReference type="EMBL" id="CP002684">
    <property type="protein sequence ID" value="ANM58866.1"/>
    <property type="molecule type" value="Genomic_DNA"/>
</dbReference>
<dbReference type="EMBL" id="BT024885">
    <property type="protein sequence ID" value="ABD85156.1"/>
    <property type="molecule type" value="mRNA"/>
</dbReference>
<dbReference type="EMBL" id="AK228919">
    <property type="protein sequence ID" value="BAF00808.1"/>
    <property type="molecule type" value="mRNA"/>
</dbReference>
<dbReference type="PIR" id="A96836">
    <property type="entry name" value="A96836"/>
</dbReference>
<dbReference type="RefSeq" id="NP_001077856.1">
    <molecule id="Q24JK4-1"/>
    <property type="nucleotide sequence ID" value="NM_001084387.2"/>
</dbReference>
<dbReference type="RefSeq" id="NP_001185449.1">
    <molecule id="Q24JK4-2"/>
    <property type="nucleotide sequence ID" value="NM_001198520.1"/>
</dbReference>
<dbReference type="RefSeq" id="NP_001321272.1">
    <molecule id="Q24JK4-1"/>
    <property type="nucleotide sequence ID" value="NM_001334987.1"/>
</dbReference>
<dbReference type="RefSeq" id="NP_178158.2">
    <molecule id="Q24JK4-1"/>
    <property type="nucleotide sequence ID" value="NM_106691.4"/>
</dbReference>
<dbReference type="RefSeq" id="NP_850985.1">
    <molecule id="Q24JK4-1"/>
    <property type="nucleotide sequence ID" value="NM_180654.3"/>
</dbReference>
<dbReference type="SMR" id="Q24JK4"/>
<dbReference type="BioGRID" id="29600">
    <property type="interactions" value="2"/>
</dbReference>
<dbReference type="FunCoup" id="Q24JK4">
    <property type="interactions" value="793"/>
</dbReference>
<dbReference type="STRING" id="3702.Q24JK4"/>
<dbReference type="GlyGen" id="Q24JK4">
    <property type="glycosylation" value="1 site"/>
</dbReference>
<dbReference type="iPTMnet" id="Q24JK4"/>
<dbReference type="PaxDb" id="3702-AT1G80420.1"/>
<dbReference type="ProteomicsDB" id="242494">
    <molecule id="Q24JK4-1"/>
</dbReference>
<dbReference type="EnsemblPlants" id="AT1G80420.1">
    <molecule id="Q24JK4-1"/>
    <property type="protein sequence ID" value="AT1G80420.1"/>
    <property type="gene ID" value="AT1G80420"/>
</dbReference>
<dbReference type="EnsemblPlants" id="AT1G80420.2">
    <molecule id="Q24JK4-1"/>
    <property type="protein sequence ID" value="AT1G80420.2"/>
    <property type="gene ID" value="AT1G80420"/>
</dbReference>
<dbReference type="EnsemblPlants" id="AT1G80420.3">
    <molecule id="Q24JK4-1"/>
    <property type="protein sequence ID" value="AT1G80420.3"/>
    <property type="gene ID" value="AT1G80420"/>
</dbReference>
<dbReference type="EnsemblPlants" id="AT1G80420.4">
    <molecule id="Q24JK4-2"/>
    <property type="protein sequence ID" value="AT1G80420.4"/>
    <property type="gene ID" value="AT1G80420"/>
</dbReference>
<dbReference type="EnsemblPlants" id="AT1G80420.5">
    <molecule id="Q24JK4-1"/>
    <property type="protein sequence ID" value="AT1G80420.5"/>
    <property type="gene ID" value="AT1G80420"/>
</dbReference>
<dbReference type="GeneID" id="844382"/>
<dbReference type="Gramene" id="AT1G80420.1">
    <molecule id="Q24JK4-1"/>
    <property type="protein sequence ID" value="AT1G80420.1"/>
    <property type="gene ID" value="AT1G80420"/>
</dbReference>
<dbReference type="Gramene" id="AT1G80420.2">
    <molecule id="Q24JK4-1"/>
    <property type="protein sequence ID" value="AT1G80420.2"/>
    <property type="gene ID" value="AT1G80420"/>
</dbReference>
<dbReference type="Gramene" id="AT1G80420.3">
    <molecule id="Q24JK4-1"/>
    <property type="protein sequence ID" value="AT1G80420.3"/>
    <property type="gene ID" value="AT1G80420"/>
</dbReference>
<dbReference type="Gramene" id="AT1G80420.4">
    <molecule id="Q24JK4-2"/>
    <property type="protein sequence ID" value="AT1G80420.4"/>
    <property type="gene ID" value="AT1G80420"/>
</dbReference>
<dbReference type="Gramene" id="AT1G80420.5">
    <molecule id="Q24JK4-1"/>
    <property type="protein sequence ID" value="AT1G80420.5"/>
    <property type="gene ID" value="AT1G80420"/>
</dbReference>
<dbReference type="KEGG" id="ath:AT1G80420"/>
<dbReference type="Araport" id="AT1G80420"/>
<dbReference type="TAIR" id="AT1G80420">
    <property type="gene designation" value="ATXRCC1"/>
</dbReference>
<dbReference type="eggNOG" id="KOG3226">
    <property type="taxonomic scope" value="Eukaryota"/>
</dbReference>
<dbReference type="HOGENOM" id="CLU_057218_0_0_1"/>
<dbReference type="InParanoid" id="Q24JK4"/>
<dbReference type="OMA" id="PTKIKQW"/>
<dbReference type="PhylomeDB" id="Q24JK4"/>
<dbReference type="PRO" id="PR:Q24JK4"/>
<dbReference type="Proteomes" id="UP000006548">
    <property type="component" value="Chromosome 1"/>
</dbReference>
<dbReference type="ExpressionAtlas" id="Q24JK4">
    <property type="expression patterns" value="baseline and differential"/>
</dbReference>
<dbReference type="GO" id="GO:0005634">
    <property type="term" value="C:nucleus"/>
    <property type="evidence" value="ECO:0007669"/>
    <property type="project" value="UniProtKB-SubCell"/>
</dbReference>
<dbReference type="GO" id="GO:0003684">
    <property type="term" value="F:damaged DNA binding"/>
    <property type="evidence" value="ECO:0007669"/>
    <property type="project" value="InterPro"/>
</dbReference>
<dbReference type="GO" id="GO:0010385">
    <property type="term" value="F:double-stranded methylated DNA binding"/>
    <property type="evidence" value="ECO:0000314"/>
    <property type="project" value="TAIR"/>
</dbReference>
<dbReference type="GO" id="GO:0006284">
    <property type="term" value="P:base-excision repair"/>
    <property type="evidence" value="ECO:0007669"/>
    <property type="project" value="InterPro"/>
</dbReference>
<dbReference type="GO" id="GO:0006303">
    <property type="term" value="P:double-strand break repair via nonhomologous end joining"/>
    <property type="evidence" value="ECO:0000315"/>
    <property type="project" value="TAIR"/>
</dbReference>
<dbReference type="GO" id="GO:0000012">
    <property type="term" value="P:single strand break repair"/>
    <property type="evidence" value="ECO:0007669"/>
    <property type="project" value="InterPro"/>
</dbReference>
<dbReference type="CDD" id="cd17725">
    <property type="entry name" value="BRCT_XRCC1_rpt1"/>
    <property type="match status" value="1"/>
</dbReference>
<dbReference type="FunFam" id="3.40.50.10190:FF:000008">
    <property type="entry name" value="X-ray repair cross complementing 1"/>
    <property type="match status" value="1"/>
</dbReference>
<dbReference type="Gene3D" id="3.40.50.10190">
    <property type="entry name" value="BRCT domain"/>
    <property type="match status" value="1"/>
</dbReference>
<dbReference type="InterPro" id="IPR001357">
    <property type="entry name" value="BRCT_dom"/>
</dbReference>
<dbReference type="InterPro" id="IPR036420">
    <property type="entry name" value="BRCT_dom_sf"/>
</dbReference>
<dbReference type="InterPro" id="IPR045080">
    <property type="entry name" value="BRCT_XRCC1_rpt1"/>
</dbReference>
<dbReference type="PANTHER" id="PTHR11370:SF5">
    <property type="entry name" value="DNA REPAIR PROTEIN XRCC1"/>
    <property type="match status" value="1"/>
</dbReference>
<dbReference type="PANTHER" id="PTHR11370">
    <property type="entry name" value="DNA-REPAIR PROTEIN XRCC1"/>
    <property type="match status" value="1"/>
</dbReference>
<dbReference type="Pfam" id="PF00533">
    <property type="entry name" value="BRCT"/>
    <property type="match status" value="1"/>
</dbReference>
<dbReference type="SMART" id="SM00292">
    <property type="entry name" value="BRCT"/>
    <property type="match status" value="1"/>
</dbReference>
<dbReference type="SUPFAM" id="SSF52113">
    <property type="entry name" value="BRCT domain"/>
    <property type="match status" value="1"/>
</dbReference>
<dbReference type="PROSITE" id="PS50172">
    <property type="entry name" value="BRCT"/>
    <property type="match status" value="1"/>
</dbReference>
<protein>
    <recommendedName>
        <fullName evidence="6">DNA-repair protein XRCC1</fullName>
        <shortName evidence="6">AtXRCC1</shortName>
    </recommendedName>
    <alternativeName>
        <fullName evidence="6">Homolog of X-ray repair cross complementing 1</fullName>
    </alternativeName>
</protein>